<feature type="chain" id="PRO_1000080477" description="Gamma-glutamyl phosphate reductase">
    <location>
        <begin position="1"/>
        <end position="423"/>
    </location>
</feature>
<evidence type="ECO:0000255" key="1">
    <source>
        <dbReference type="HAMAP-Rule" id="MF_00412"/>
    </source>
</evidence>
<proteinExistence type="inferred from homology"/>
<organism>
    <name type="scientific">Brucella suis (strain ATCC 23445 / NCTC 10510)</name>
    <dbReference type="NCBI Taxonomy" id="470137"/>
    <lineage>
        <taxon>Bacteria</taxon>
        <taxon>Pseudomonadati</taxon>
        <taxon>Pseudomonadota</taxon>
        <taxon>Alphaproteobacteria</taxon>
        <taxon>Hyphomicrobiales</taxon>
        <taxon>Brucellaceae</taxon>
        <taxon>Brucella/Ochrobactrum group</taxon>
        <taxon>Brucella</taxon>
    </lineage>
</organism>
<protein>
    <recommendedName>
        <fullName evidence="1">Gamma-glutamyl phosphate reductase</fullName>
        <shortName evidence="1">GPR</shortName>
        <ecNumber evidence="1">1.2.1.41</ecNumber>
    </recommendedName>
    <alternativeName>
        <fullName evidence="1">Glutamate-5-semialdehyde dehydrogenase</fullName>
    </alternativeName>
    <alternativeName>
        <fullName evidence="1">Glutamyl-gamma-semialdehyde dehydrogenase</fullName>
        <shortName evidence="1">GSA dehydrogenase</shortName>
    </alternativeName>
</protein>
<dbReference type="EC" id="1.2.1.41" evidence="1"/>
<dbReference type="EMBL" id="CP000912">
    <property type="protein sequence ID" value="ABY40253.1"/>
    <property type="molecule type" value="Genomic_DNA"/>
</dbReference>
<dbReference type="RefSeq" id="WP_006074580.1">
    <property type="nucleotide sequence ID" value="NC_010167.1"/>
</dbReference>
<dbReference type="SMR" id="A9WWW7"/>
<dbReference type="KEGG" id="bmt:BSUIS_B1321"/>
<dbReference type="HOGENOM" id="CLU_030231_0_0_5"/>
<dbReference type="UniPathway" id="UPA00098">
    <property type="reaction ID" value="UER00360"/>
</dbReference>
<dbReference type="Proteomes" id="UP000008545">
    <property type="component" value="Chromosome II"/>
</dbReference>
<dbReference type="GO" id="GO:0005737">
    <property type="term" value="C:cytoplasm"/>
    <property type="evidence" value="ECO:0007669"/>
    <property type="project" value="UniProtKB-SubCell"/>
</dbReference>
<dbReference type="GO" id="GO:0004350">
    <property type="term" value="F:glutamate-5-semialdehyde dehydrogenase activity"/>
    <property type="evidence" value="ECO:0007669"/>
    <property type="project" value="UniProtKB-UniRule"/>
</dbReference>
<dbReference type="GO" id="GO:0050661">
    <property type="term" value="F:NADP binding"/>
    <property type="evidence" value="ECO:0007669"/>
    <property type="project" value="InterPro"/>
</dbReference>
<dbReference type="GO" id="GO:0055129">
    <property type="term" value="P:L-proline biosynthetic process"/>
    <property type="evidence" value="ECO:0007669"/>
    <property type="project" value="UniProtKB-UniRule"/>
</dbReference>
<dbReference type="CDD" id="cd07079">
    <property type="entry name" value="ALDH_F18-19_ProA-GPR"/>
    <property type="match status" value="1"/>
</dbReference>
<dbReference type="Gene3D" id="3.40.605.10">
    <property type="entry name" value="Aldehyde Dehydrogenase, Chain A, domain 1"/>
    <property type="match status" value="1"/>
</dbReference>
<dbReference type="Gene3D" id="3.40.309.10">
    <property type="entry name" value="Aldehyde Dehydrogenase, Chain A, domain 2"/>
    <property type="match status" value="1"/>
</dbReference>
<dbReference type="HAMAP" id="MF_00412">
    <property type="entry name" value="ProA"/>
    <property type="match status" value="1"/>
</dbReference>
<dbReference type="InterPro" id="IPR016161">
    <property type="entry name" value="Ald_DH/histidinol_DH"/>
</dbReference>
<dbReference type="InterPro" id="IPR016163">
    <property type="entry name" value="Ald_DH_C"/>
</dbReference>
<dbReference type="InterPro" id="IPR016162">
    <property type="entry name" value="Ald_DH_N"/>
</dbReference>
<dbReference type="InterPro" id="IPR015590">
    <property type="entry name" value="Aldehyde_DH_dom"/>
</dbReference>
<dbReference type="InterPro" id="IPR020593">
    <property type="entry name" value="G-glutamylP_reductase_CS"/>
</dbReference>
<dbReference type="InterPro" id="IPR012134">
    <property type="entry name" value="Glu-5-SA_DH"/>
</dbReference>
<dbReference type="InterPro" id="IPR000965">
    <property type="entry name" value="GPR_dom"/>
</dbReference>
<dbReference type="NCBIfam" id="NF001221">
    <property type="entry name" value="PRK00197.1"/>
    <property type="match status" value="1"/>
</dbReference>
<dbReference type="NCBIfam" id="TIGR00407">
    <property type="entry name" value="proA"/>
    <property type="match status" value="1"/>
</dbReference>
<dbReference type="PANTHER" id="PTHR11063:SF8">
    <property type="entry name" value="DELTA-1-PYRROLINE-5-CARBOXYLATE SYNTHASE"/>
    <property type="match status" value="1"/>
</dbReference>
<dbReference type="PANTHER" id="PTHR11063">
    <property type="entry name" value="GLUTAMATE SEMIALDEHYDE DEHYDROGENASE"/>
    <property type="match status" value="1"/>
</dbReference>
<dbReference type="Pfam" id="PF00171">
    <property type="entry name" value="Aldedh"/>
    <property type="match status" value="1"/>
</dbReference>
<dbReference type="PIRSF" id="PIRSF000151">
    <property type="entry name" value="GPR"/>
    <property type="match status" value="1"/>
</dbReference>
<dbReference type="SUPFAM" id="SSF53720">
    <property type="entry name" value="ALDH-like"/>
    <property type="match status" value="1"/>
</dbReference>
<dbReference type="PROSITE" id="PS01223">
    <property type="entry name" value="PROA"/>
    <property type="match status" value="1"/>
</dbReference>
<keyword id="KW-0028">Amino-acid biosynthesis</keyword>
<keyword id="KW-0963">Cytoplasm</keyword>
<keyword id="KW-0521">NADP</keyword>
<keyword id="KW-0560">Oxidoreductase</keyword>
<keyword id="KW-0641">Proline biosynthesis</keyword>
<name>PROA_BRUSI</name>
<accession>A9WWW7</accession>
<comment type="function">
    <text evidence="1">Catalyzes the NADPH-dependent reduction of L-glutamate 5-phosphate into L-glutamate 5-semialdehyde and phosphate. The product spontaneously undergoes cyclization to form 1-pyrroline-5-carboxylate.</text>
</comment>
<comment type="catalytic activity">
    <reaction evidence="1">
        <text>L-glutamate 5-semialdehyde + phosphate + NADP(+) = L-glutamyl 5-phosphate + NADPH + H(+)</text>
        <dbReference type="Rhea" id="RHEA:19541"/>
        <dbReference type="ChEBI" id="CHEBI:15378"/>
        <dbReference type="ChEBI" id="CHEBI:43474"/>
        <dbReference type="ChEBI" id="CHEBI:57783"/>
        <dbReference type="ChEBI" id="CHEBI:58066"/>
        <dbReference type="ChEBI" id="CHEBI:58274"/>
        <dbReference type="ChEBI" id="CHEBI:58349"/>
        <dbReference type="EC" id="1.2.1.41"/>
    </reaction>
</comment>
<comment type="pathway">
    <text evidence="1">Amino-acid biosynthesis; L-proline biosynthesis; L-glutamate 5-semialdehyde from L-glutamate: step 2/2.</text>
</comment>
<comment type="subcellular location">
    <subcellularLocation>
        <location evidence="1">Cytoplasm</location>
    </subcellularLocation>
</comment>
<comment type="similarity">
    <text evidence="1">Belongs to the gamma-glutamyl phosphate reductase family.</text>
</comment>
<gene>
    <name evidence="1" type="primary">proA</name>
    <name type="ordered locus">BSUIS_B1321</name>
</gene>
<sequence>MLVKADMTKDIAQVMAEVGRKAKAAAAPLSIATSEQKNKALNAAADAILEARADILEANRLDLANAEKNGMAASFVDRLTLNEARIDAIAEGIRAIATLPDPVGEVIAEWDRPNGLHIERVRTPLGVIGVIYESRPNVTADAGALCLKAGNAVILRGGSDSAHSSAAIHKALEAANLPADAIQIVPVTDRAAVGEMLKGLGGAIDVIVPRGGKSLVARVQSEARVPVFAHLEGICHLYIDKSADLDMARRIALDAKMRRTGICGAAETLLVDRAVASTHLAPILGDLAAGGCEIRGSAEVLALYPAAKPATEEDWSTEYLDAIISVALVDGISGAIDHINRYSSHHTEAIVAEDAQTVARFFNEIDSAILLHNASTQFADGGEFGMGAEIGIATGKMHARGPVGVEQLTSFKYRVRGSGQVRG</sequence>
<reference key="1">
    <citation type="submission" date="2007-12" db="EMBL/GenBank/DDBJ databases">
        <title>Brucella suis ATCC 23445 whole genome shotgun sequencing project.</title>
        <authorList>
            <person name="Setubal J.C."/>
            <person name="Bowns C."/>
            <person name="Boyle S."/>
            <person name="Crasta O.R."/>
            <person name="Czar M.J."/>
            <person name="Dharmanolla C."/>
            <person name="Gillespie J.J."/>
            <person name="Kenyon R.W."/>
            <person name="Lu J."/>
            <person name="Mane S."/>
            <person name="Mohapatra S."/>
            <person name="Nagrani S."/>
            <person name="Purkayastha A."/>
            <person name="Rajasimha H.K."/>
            <person name="Shallom J.M."/>
            <person name="Shallom S."/>
            <person name="Shukla M."/>
            <person name="Snyder E.E."/>
            <person name="Sobral B.W."/>
            <person name="Wattam A.R."/>
            <person name="Will R."/>
            <person name="Williams K."/>
            <person name="Yoo H."/>
            <person name="Bruce D."/>
            <person name="Detter C."/>
            <person name="Munk C."/>
            <person name="Brettin T.S."/>
        </authorList>
    </citation>
    <scope>NUCLEOTIDE SEQUENCE [LARGE SCALE GENOMIC DNA]</scope>
    <source>
        <strain>ATCC 23445 / NCTC 10510</strain>
    </source>
</reference>